<comment type="function">
    <text evidence="1 3 4 5 6 8 10 11">DNA-dependent RNA polymerase catalyzes the transcription of DNA into RNA using the four ribonucleoside triphosphates as substrates (PubMed:12391170, PubMed:20413673, PubMed:33558764, PubMed:34675218, PubMed:35637192). Specific peripheric component of RNA polymerase III (Pol III) which synthesizes small non-coding RNAs including 5S rRNA, snRNAs, tRNAs and miRNAs from at least 500 distinct genomic loci. Assembles with POLR3E/RPC5 forming a subcomplex that binds the Pol III core. Enables recruitment of Pol III at transcription initiation site and drives transcription initiation from both type 2 and type 3 DNA promoters. Required for efficient transcription termination and reinitiation (By similarity) (PubMed:12391170, PubMed:20413673, PubMed:35637192). Pol III plays a key role in sensing and limiting infection by intracellular bacteria and DNA viruses. Acts as nuclear and cytosolic DNA sensor involved in innate immune response. Can sense non-self dsDNA that serves as template for transcription into dsRNA. The non-self RNA polymerase III transcripts, such as Epstein-Barr virus-encoded RNAs (EBERs) induce type I interferon and NF-kappa-B through the RIG-I pathway (PubMed:19609254, PubMed:19631370).</text>
</comment>
<comment type="subunit">
    <text evidence="3 7 9 10">Component of the RNA polymerase III complex consisting of 17 subunits: a ten-subunit horseshoe-shaped catalytic core composed of POLR3A/RPC1, POLR3B/RPC2, POLR1C/RPAC1, POLR1D/RPAC2, POLR3K/RPC10, POLR2E/RPABC1, POLR2F/RPABC2, POLR2H/RPABC3, POLR2K/RPABC4 and POLR2L/RPABC5; a mobile stalk composed of two subunits POLR3H/RPC8 and CRCP/RPC9, protruding from the core and functioning primarily in transcription initiation; and additional subunits homologous to general transcription factors of the RNA polymerase II machinery, POLR3C/RPC3-POLR3F/RPC6-POLR3G/RPC7 heterotrimer required for transcription initiation and POLR3D/RPC4-POLR3E/RPC5 heterodimer involved in both transcription initiation and termination (PubMed:12391170, PubMed:33335104, PubMed:33674783, PubMed:34675218).</text>
</comment>
<comment type="subcellular location">
    <subcellularLocation>
        <location evidence="7">Nucleus</location>
    </subcellularLocation>
</comment>
<comment type="PTM">
    <text evidence="8">Sumoylation on Lys-141 can serve as a signal to mark misfolded Pol III for proteasomal degradation.</text>
</comment>
<comment type="similarity">
    <text evidence="12">Belongs to the eukaryotic RPC4/POLR3D RNA polymerase subunit family.</text>
</comment>
<comment type="sequence caution" evidence="12">
    <conflict type="frameshift">
        <sequence resource="EMBL" id="BC000516"/>
    </conflict>
</comment>
<comment type="sequence caution" evidence="12">
    <conflict type="frameshift">
        <sequence resource="EMBL" id="BC003039"/>
    </conflict>
</comment>
<protein>
    <recommendedName>
        <fullName>DNA-directed RNA polymerase III subunit RPC4</fullName>
        <shortName>RNA polymerase III subunit C4</shortName>
    </recommendedName>
    <alternativeName>
        <fullName>DNA-directed RNA polymerase III subunit D</fullName>
    </alternativeName>
    <alternativeName>
        <fullName>Protein BN51</fullName>
    </alternativeName>
    <alternativeName>
        <fullName>RNA polymerase III 47 kDa subunit</fullName>
    </alternativeName>
    <alternativeName>
        <fullName>RPC53 homolog</fullName>
    </alternativeName>
</protein>
<proteinExistence type="evidence at protein level"/>
<sequence>MSEGNAAGEPSTPGGPRPLLTGARGLIGRRPAPPLTPGRLPSIRSRDLTLGGVKKKTFTPNIISRKIKEEPKEEVTVKKEKRERDRDRQREGHGRGRGRPEVIQSHSIFEQGPAEMMKKKGNWDKTVDVSDMGPSHIINIKKEKRETDEETKQILRMLEKDDFLDDPGLRNDTRNMPVQLPLAHSGWLFKEENDEPDVKPWLAGPKEEDMEVDIPAVKVKEEPRDEEEEAKMKAPPKAARKTPGLPKDVSVAELLRELSLTKEEELLFLQLPDTLPGQPPTQDIKPIKTEVQGEDGQVVLIKQEKDREAKLAENACTLADLTEGQVGKLLIRKSGRVQLLLGKVTLDVTMGTACSFLQELVSVGLGDSRTGEMTVLGHVKHKLVCSPDFESLLDHKHR</sequence>
<reference key="1">
    <citation type="journal article" date="1987" name="Mol. Cell. Biol.">
        <title>Isolation of the human gene that complements a temperature-sensitive cell cycle mutation in BHK cells.</title>
        <authorList>
            <person name="Ittmann M."/>
            <person name="Greco A."/>
            <person name="Basilico C."/>
        </authorList>
    </citation>
    <scope>NUCLEOTIDE SEQUENCE [MRNA]</scope>
</reference>
<reference key="2">
    <citation type="journal article" date="2002" name="Mol. Cell. Biol.">
        <title>Characterization of human RNA polymerase III identifies orthologues for Saccharomyces cerevisiae RNA polymerase III subunits.</title>
        <authorList>
            <person name="Hu P."/>
            <person name="Wu S."/>
            <person name="Sun Y."/>
            <person name="Yuan C.-C."/>
            <person name="Kobayashi R."/>
            <person name="Myers M.P."/>
            <person name="Hernandez N."/>
        </authorList>
    </citation>
    <scope>NUCLEOTIDE SEQUENCE [MRNA]</scope>
    <scope>IDENTIFICATION IN THE RNA POL III COMPLEX</scope>
    <scope>IDENTIFICATION BY MASS SPECTROMETRY</scope>
    <scope>INTERACTION WITH POLR3E</scope>
    <scope>FUNCTION</scope>
</reference>
<reference key="3">
    <citation type="submission" date="2004-06" db="EMBL/GenBank/DDBJ databases">
        <title>Cloning of human full open reading frames in Gateway(TM) system entry vector (pDONR201).</title>
        <authorList>
            <person name="Ebert L."/>
            <person name="Schick M."/>
            <person name="Neubert P."/>
            <person name="Schatten R."/>
            <person name="Henze S."/>
            <person name="Korn B."/>
        </authorList>
    </citation>
    <scope>NUCLEOTIDE SEQUENCE [LARGE SCALE MRNA]</scope>
</reference>
<reference key="4">
    <citation type="journal article" date="2004" name="Genome Res.">
        <title>The status, quality, and expansion of the NIH full-length cDNA project: the Mammalian Gene Collection (MGC).</title>
        <authorList>
            <consortium name="The MGC Project Team"/>
        </authorList>
    </citation>
    <scope>NUCLEOTIDE SEQUENCE [LARGE SCALE MRNA]</scope>
    <source>
        <tissue>Lung</tissue>
        <tissue>Lymph</tissue>
    </source>
</reference>
<reference key="5">
    <citation type="journal article" date="2001" name="J. Biol. Chem.">
        <title>Reconstitution of transcription from the human U6 small nuclear RNA promoter with eight recombinant polypeptides and a partially purified RNA polymerase III complex.</title>
        <authorList>
            <person name="Chong S.S."/>
            <person name="Hu P."/>
            <person name="Hernandez N."/>
        </authorList>
    </citation>
    <scope>NUCLEOTIDE SEQUENCE [MRNA] OF 1-50</scope>
</reference>
<reference key="6">
    <citation type="submission" date="1993-10" db="EMBL/GenBank/DDBJ databases">
        <title>Promoter structure and cell cycle control of the BN51 cell cycle gene, which encodes a subunit of RNA polymerase III.</title>
        <authorList>
            <person name="Ittmann M."/>
        </authorList>
    </citation>
    <scope>NUCLEOTIDE SEQUENCE [GENOMIC DNA] OF 1-12</scope>
</reference>
<reference key="7">
    <citation type="journal article" date="2009" name="Cell">
        <title>RNA polymerase III detects cytosolic DNA and induces type I interferons through the RIG-I pathway.</title>
        <authorList>
            <person name="Chiu Y.-H."/>
            <person name="Macmillan J.B."/>
            <person name="Chen Z.J."/>
        </authorList>
    </citation>
    <scope>FUNCTION</scope>
</reference>
<reference key="8">
    <citation type="journal article" date="2009" name="Nat. Immunol.">
        <title>RIG-I-dependent sensing of poly(dA:dT) through the induction of an RNA polymerase III-transcribed RNA intermediate.</title>
        <authorList>
            <person name="Ablasser A."/>
            <person name="Bauernfeind F."/>
            <person name="Hartmann G."/>
            <person name="Latz E."/>
            <person name="Fitzgerald K.A."/>
            <person name="Hornung V."/>
        </authorList>
    </citation>
    <scope>FUNCTION</scope>
</reference>
<reference key="9">
    <citation type="journal article" date="2010" name="Genome Res.">
        <title>Defining the RNA polymerase III transcriptome: Genome-wide localization of the RNA polymerase III transcription machinery in human cells.</title>
        <authorList>
            <person name="Canella D."/>
            <person name="Praz V."/>
            <person name="Reina J.H."/>
            <person name="Cousin P."/>
            <person name="Hernandez N."/>
        </authorList>
    </citation>
    <scope>FUNCTION OF POL III</scope>
</reference>
<reference key="10">
    <citation type="journal article" date="2011" name="BMC Syst. Biol.">
        <title>Initial characterization of the human central proteome.</title>
        <authorList>
            <person name="Burkard T.R."/>
            <person name="Planyavsky M."/>
            <person name="Kaupe I."/>
            <person name="Breitwieser F.P."/>
            <person name="Buerckstuemmer T."/>
            <person name="Bennett K.L."/>
            <person name="Superti-Furga G."/>
            <person name="Colinge J."/>
        </authorList>
    </citation>
    <scope>IDENTIFICATION BY MASS SPECTROMETRY [LARGE SCALE ANALYSIS]</scope>
</reference>
<reference key="11">
    <citation type="journal article" date="2012" name="Proc. Natl. Acad. Sci. U.S.A.">
        <title>N-terminal acetylome analyses and functional insights of the N-terminal acetyltransferase NatB.</title>
        <authorList>
            <person name="Van Damme P."/>
            <person name="Lasa M."/>
            <person name="Polevoda B."/>
            <person name="Gazquez C."/>
            <person name="Elosegui-Artola A."/>
            <person name="Kim D.S."/>
            <person name="De Juan-Pardo E."/>
            <person name="Demeyer K."/>
            <person name="Hole K."/>
            <person name="Larrea E."/>
            <person name="Timmerman E."/>
            <person name="Prieto J."/>
            <person name="Arnesen T."/>
            <person name="Sherman F."/>
            <person name="Gevaert K."/>
            <person name="Aldabe R."/>
        </authorList>
    </citation>
    <scope>ACETYLATION [LARGE SCALE ANALYSIS] AT SER-2</scope>
    <scope>CLEAVAGE OF INITIATOR METHIONINE [LARGE SCALE ANALYSIS]</scope>
    <scope>IDENTIFICATION BY MASS SPECTROMETRY [LARGE SCALE ANALYSIS]</scope>
</reference>
<reference key="12">
    <citation type="journal article" date="2013" name="J. Proteome Res.">
        <title>Toward a comprehensive characterization of a human cancer cell phosphoproteome.</title>
        <authorList>
            <person name="Zhou H."/>
            <person name="Di Palma S."/>
            <person name="Preisinger C."/>
            <person name="Peng M."/>
            <person name="Polat A.N."/>
            <person name="Heck A.J."/>
            <person name="Mohammed S."/>
        </authorList>
    </citation>
    <scope>PHOSPHORYLATION [LARGE SCALE ANALYSIS] AT SER-42</scope>
    <scope>IDENTIFICATION BY MASS SPECTROMETRY [LARGE SCALE ANALYSIS]</scope>
    <source>
        <tissue>Cervix carcinoma</tissue>
        <tissue>Erythroleukemia</tissue>
    </source>
</reference>
<reference key="13">
    <citation type="journal article" date="2014" name="Mol. Cell. Proteomics">
        <title>Immunoaffinity enrichment and mass spectrometry analysis of protein methylation.</title>
        <authorList>
            <person name="Guo A."/>
            <person name="Gu H."/>
            <person name="Zhou J."/>
            <person name="Mulhern D."/>
            <person name="Wang Y."/>
            <person name="Lee K.A."/>
            <person name="Yang V."/>
            <person name="Aguiar M."/>
            <person name="Kornhauser J."/>
            <person name="Jia X."/>
            <person name="Ren J."/>
            <person name="Beausoleil S.A."/>
            <person name="Silva J.C."/>
            <person name="Vemulapalli V."/>
            <person name="Bedford M.T."/>
            <person name="Comb M.J."/>
        </authorList>
    </citation>
    <scope>METHYLATION [LARGE SCALE ANALYSIS] AT ARG-95; ARG-97 AND ARG-99</scope>
    <scope>IDENTIFICATION BY MASS SPECTROMETRY [LARGE SCALE ANALYSIS]</scope>
    <source>
        <tissue>Colon carcinoma</tissue>
    </source>
</reference>
<reference key="14">
    <citation type="journal article" date="2014" name="Nat. Struct. Mol. Biol.">
        <title>Uncovering global SUMOylation signaling networks in a site-specific manner.</title>
        <authorList>
            <person name="Hendriks I.A."/>
            <person name="D'Souza R.C."/>
            <person name="Yang B."/>
            <person name="Verlaan-de Vries M."/>
            <person name="Mann M."/>
            <person name="Vertegaal A.C."/>
        </authorList>
    </citation>
    <scope>SUMOYLATION [LARGE SCALE ANALYSIS] AT LYS-141; LYS-206; LYS-220 AND LYS-302</scope>
    <scope>IDENTIFICATION BY MASS SPECTROMETRY [LARGE SCALE ANALYSIS]</scope>
</reference>
<reference key="15">
    <citation type="journal article" date="2015" name="Cell Rep.">
        <title>SUMO-2 orchestrates chromatin modifiers in response to DNA damage.</title>
        <authorList>
            <person name="Hendriks I.A."/>
            <person name="Treffers L.W."/>
            <person name="Verlaan-de Vries M."/>
            <person name="Olsen J.V."/>
            <person name="Vertegaal A.C."/>
        </authorList>
    </citation>
    <scope>SUMOYLATION [LARGE SCALE ANALYSIS] AT LYS-78; LYS-141; LYS-220; LYS-285 AND LYS-302</scope>
    <scope>IDENTIFICATION BY MASS SPECTROMETRY [LARGE SCALE ANALYSIS]</scope>
</reference>
<reference key="16">
    <citation type="journal article" date="2015" name="Mol. Cell. Proteomics">
        <title>System-wide analysis of SUMOylation dynamics in response to replication stress reveals novel small ubiquitin-like modified target proteins and acceptor lysines relevant for genome stability.</title>
        <authorList>
            <person name="Xiao Z."/>
            <person name="Chang J.G."/>
            <person name="Hendriks I.A."/>
            <person name="Sigurdsson J.O."/>
            <person name="Olsen J.V."/>
            <person name="Vertegaal A.C."/>
        </authorList>
    </citation>
    <scope>SUMOYLATION [LARGE SCALE ANALYSIS] AT LYS-78; LYS-141; LYS-220; LYS-302 AND LYS-396</scope>
    <scope>IDENTIFICATION BY MASS SPECTROMETRY [LARGE SCALE ANALYSIS]</scope>
</reference>
<reference key="17">
    <citation type="journal article" date="2017" name="Nat. Struct. Mol. Biol.">
        <title>Site-specific mapping of the human SUMO proteome reveals co-modification with phosphorylation.</title>
        <authorList>
            <person name="Hendriks I.A."/>
            <person name="Lyon D."/>
            <person name="Young C."/>
            <person name="Jensen L.J."/>
            <person name="Vertegaal A.C."/>
            <person name="Nielsen M.L."/>
        </authorList>
    </citation>
    <scope>SUMOYLATION [LARGE SCALE ANALYSIS] AT LYS-68; LYS-78; LYS-141; LYS-152; LYS-160; LYS-190; LYS-199; LYS-206; LYS-220; LYS-285; LYS-302; LYS-310 AND LYS-396</scope>
    <scope>IDENTIFICATION BY MASS SPECTROMETRY [LARGE SCALE ANALYSIS]</scope>
</reference>
<reference key="18">
    <citation type="journal article" date="2022" name="Nat. Commun.">
        <title>A cancer-associated RNA polymerase III identity drives robust transcription and expression of snaR-A non-coding RNA.</title>
        <authorList>
            <person name="Van Bortle K."/>
            <person name="Marciano D.P."/>
            <person name="Liu Q."/>
            <person name="Chou T."/>
            <person name="Lipchik A.M."/>
            <person name="Gollapudi S."/>
            <person name="Geller B.S."/>
            <person name="Monte E."/>
            <person name="Kamakaka R.T."/>
            <person name="Snyder M.P."/>
        </authorList>
    </citation>
    <scope>FUNCTION OF POL III</scope>
    <scope>SUBUNIT</scope>
</reference>
<reference key="19">
    <citation type="journal article" date="2020" name="Nat. Commun.">
        <title>Structure of human RNA polymerase III.</title>
        <authorList>
            <person name="Ramsay E.P."/>
            <person name="Abascal-Palacios G."/>
            <person name="Daiss J.L."/>
            <person name="King H."/>
            <person name="Gouge J."/>
            <person name="Pilsl M."/>
            <person name="Beuron F."/>
            <person name="Morris E."/>
            <person name="Gunkel P."/>
            <person name="Engel C."/>
            <person name="Vannini A."/>
        </authorList>
    </citation>
    <scope>STRUCTURE BY ELECTRON MICROSCOPY (4.00 ANGSTROMS)</scope>
    <scope>SUBUNIT</scope>
    <scope>SUBCELLULAR LOCATION</scope>
</reference>
<reference key="20">
    <citation type="journal article" date="2021" name="Cell Res.">
        <title>Structure of human RNA polymerase III elongation complex.</title>
        <authorList>
            <person name="Li L."/>
            <person name="Yu Z."/>
            <person name="Zhao D."/>
            <person name="Ren Y."/>
            <person name="Hou H."/>
            <person name="Xu Y."/>
        </authorList>
    </citation>
    <scope>STRUCTURE BY ELECTRON MICROSCOPY (3.35 ANGSTROMS)</scope>
    <scope>SUBUNIT</scope>
</reference>
<reference key="21">
    <citation type="journal article" date="2021" name="Nat. Commun.">
        <title>Structural insights into RNA polymerase III-mediated transcription termination through trapping poly-deoxythymidine.</title>
        <authorList>
            <person name="Hou H."/>
            <person name="Li Y."/>
            <person name="Wang M."/>
            <person name="Liu A."/>
            <person name="Yu Z."/>
            <person name="Chen K."/>
            <person name="Zhao D."/>
            <person name="Xu Y."/>
        </authorList>
    </citation>
    <scope>STRUCTURE BY ELECTRON MICROSCOPY (3.60 ANGSTROMS)</scope>
    <scope>FUNCTION</scope>
    <scope>SUBUNIT</scope>
</reference>
<reference key="22">
    <citation type="journal article" date="2021" name="Nat. Struct. Mol. Biol.">
        <title>Cryo-EM structures of human RNA polymerase III in its unbound and transcribing states.</title>
        <authorList>
            <person name="Girbig M."/>
            <person name="Misiaszek A.D."/>
            <person name="Vorlander M.K."/>
            <person name="Lafita A."/>
            <person name="Grotsch H."/>
            <person name="Baudin F."/>
            <person name="Bateman A."/>
            <person name="Muller C.W."/>
        </authorList>
    </citation>
    <scope>STRUCTURE BY ELECTRON MICROSCOPY (2.80 ANGSTROMS)</scope>
    <scope>FUNCTION</scope>
    <scope>SUBUNIT</scope>
    <scope>SUMOYLATION AT LYS-141</scope>
</reference>
<reference key="23">
    <citation type="journal article" date="2021" name="Nat. Struct. Mol. Biol.">
        <title>Structural insights into transcriptional regulation of human RNA polymerase III.</title>
        <authorList>
            <person name="Wang Q."/>
            <person name="Li S."/>
            <person name="Wan F."/>
            <person name="Xu Y."/>
            <person name="Wu Z."/>
            <person name="Cao M."/>
            <person name="Lan P."/>
            <person name="Lei M."/>
            <person name="Wu J."/>
        </authorList>
    </citation>
    <scope>STRUCTURE BY ELECTRON MICROSCOPY (2.90 ANGSTROMS)</scope>
    <scope>SUBUNIT</scope>
</reference>
<gene>
    <name evidence="13" type="primary">POLR3D</name>
    <name type="synonym">BN51</name>
    <name type="synonym">BN51T</name>
</gene>
<evidence type="ECO:0000250" key="1">
    <source>
        <dbReference type="UniProtKB" id="P25441"/>
    </source>
</evidence>
<evidence type="ECO:0000256" key="2">
    <source>
        <dbReference type="SAM" id="MobiDB-lite"/>
    </source>
</evidence>
<evidence type="ECO:0000269" key="3">
    <source>
    </source>
</evidence>
<evidence type="ECO:0000269" key="4">
    <source>
    </source>
</evidence>
<evidence type="ECO:0000269" key="5">
    <source>
    </source>
</evidence>
<evidence type="ECO:0000269" key="6">
    <source>
    </source>
</evidence>
<evidence type="ECO:0000269" key="7">
    <source>
    </source>
</evidence>
<evidence type="ECO:0000269" key="8">
    <source>
    </source>
</evidence>
<evidence type="ECO:0000269" key="9">
    <source>
    </source>
</evidence>
<evidence type="ECO:0000269" key="10">
    <source>
    </source>
</evidence>
<evidence type="ECO:0000269" key="11">
    <source>
    </source>
</evidence>
<evidence type="ECO:0000305" key="12"/>
<evidence type="ECO:0000312" key="13">
    <source>
        <dbReference type="HGNC" id="HGNC:1080"/>
    </source>
</evidence>
<evidence type="ECO:0007744" key="14">
    <source>
    </source>
</evidence>
<evidence type="ECO:0007744" key="15">
    <source>
    </source>
</evidence>
<evidence type="ECO:0007744" key="16">
    <source>
    </source>
</evidence>
<evidence type="ECO:0007744" key="17">
    <source>
    </source>
</evidence>
<evidence type="ECO:0007744" key="18">
    <source>
    </source>
</evidence>
<evidence type="ECO:0007744" key="19">
    <source>
    </source>
</evidence>
<evidence type="ECO:0007744" key="20">
    <source>
    </source>
</evidence>
<evidence type="ECO:0007829" key="21">
    <source>
        <dbReference type="PDB" id="7AE1"/>
    </source>
</evidence>
<evidence type="ECO:0007829" key="22">
    <source>
        <dbReference type="PDB" id="7D58"/>
    </source>
</evidence>
<name>RPC4_HUMAN</name>
<keyword id="KW-0002">3D-structure</keyword>
<keyword id="KW-0007">Acetylation</keyword>
<keyword id="KW-0051">Antiviral defense</keyword>
<keyword id="KW-0240">DNA-directed RNA polymerase</keyword>
<keyword id="KW-0391">Immunity</keyword>
<keyword id="KW-0399">Innate immunity</keyword>
<keyword id="KW-1017">Isopeptide bond</keyword>
<keyword id="KW-0488">Methylation</keyword>
<keyword id="KW-0539">Nucleus</keyword>
<keyword id="KW-0597">Phosphoprotein</keyword>
<keyword id="KW-1267">Proteomics identification</keyword>
<keyword id="KW-1185">Reference proteome</keyword>
<keyword id="KW-0804">Transcription</keyword>
<keyword id="KW-0832">Ubl conjugation</keyword>
<accession>P05423</accession>
<accession>Q6FI28</accession>
<accession>Q9BPV7</accession>
<accession>Q9BPZ1</accession>
<accession>Q9BXB3</accession>
<feature type="initiator methionine" description="Removed" evidence="14">
    <location>
        <position position="1"/>
    </location>
</feature>
<feature type="chain" id="PRO_0000073967" description="DNA-directed RNA polymerase III subunit RPC4">
    <location>
        <begin position="2"/>
        <end position="398"/>
    </location>
</feature>
<feature type="region of interest" description="Disordered" evidence="2">
    <location>
        <begin position="1"/>
        <end position="114"/>
    </location>
</feature>
<feature type="region of interest" description="Disordered" evidence="2">
    <location>
        <begin position="220"/>
        <end position="244"/>
    </location>
</feature>
<feature type="compositionally biased region" description="Basic and acidic residues" evidence="2">
    <location>
        <begin position="66"/>
        <end position="100"/>
    </location>
</feature>
<feature type="modified residue" description="N-acetylserine" evidence="14">
    <location>
        <position position="2"/>
    </location>
</feature>
<feature type="modified residue" description="Phosphoserine" evidence="15">
    <location>
        <position position="42"/>
    </location>
</feature>
<feature type="modified residue" description="Omega-N-methylarginine" evidence="16">
    <location>
        <position position="95"/>
    </location>
</feature>
<feature type="modified residue" description="Omega-N-methylarginine" evidence="16">
    <location>
        <position position="97"/>
    </location>
</feature>
<feature type="modified residue" description="Omega-N-methylarginine" evidence="16">
    <location>
        <position position="99"/>
    </location>
</feature>
<feature type="cross-link" description="Glycyl lysine isopeptide (Lys-Gly) (interchain with G-Cter in SUMO2)" evidence="20">
    <location>
        <position position="68"/>
    </location>
</feature>
<feature type="cross-link" description="Glycyl lysine isopeptide (Lys-Gly) (interchain with G-Cter in SUMO2)" evidence="18 19 20">
    <location>
        <position position="78"/>
    </location>
</feature>
<feature type="cross-link" description="Glycyl lysine isopeptide (Lys-Gly) (interchain with G-Cter in SUMO2)" evidence="8 17 18 19 20">
    <location>
        <position position="141"/>
    </location>
</feature>
<feature type="cross-link" description="Glycyl lysine isopeptide (Lys-Gly) (interchain with G-Cter in SUMO2)" evidence="20">
    <location>
        <position position="152"/>
    </location>
</feature>
<feature type="cross-link" description="Glycyl lysine isopeptide (Lys-Gly) (interchain with G-Cter in SUMO2)" evidence="20">
    <location>
        <position position="160"/>
    </location>
</feature>
<feature type="cross-link" description="Glycyl lysine isopeptide (Lys-Gly) (interchain with G-Cter in SUMO2)" evidence="20">
    <location>
        <position position="190"/>
    </location>
</feature>
<feature type="cross-link" description="Glycyl lysine isopeptide (Lys-Gly) (interchain with G-Cter in SUMO2)" evidence="20">
    <location>
        <position position="199"/>
    </location>
</feature>
<feature type="cross-link" description="Glycyl lysine isopeptide (Lys-Gly) (interchain with G-Cter in SUMO2)" evidence="17 20">
    <location>
        <position position="206"/>
    </location>
</feature>
<feature type="cross-link" description="Glycyl lysine isopeptide (Lys-Gly) (interchain with G-Cter in SUMO2)" evidence="17 18 19 20">
    <location>
        <position position="220"/>
    </location>
</feature>
<feature type="cross-link" description="Glycyl lysine isopeptide (Lys-Gly) (interchain with G-Cter in SUMO2)" evidence="19 20">
    <location>
        <position position="285"/>
    </location>
</feature>
<feature type="cross-link" description="Glycyl lysine isopeptide (Lys-Gly) (interchain with G-Cter in SUMO2)" evidence="17 18 19 20">
    <location>
        <position position="302"/>
    </location>
</feature>
<feature type="cross-link" description="Glycyl lysine isopeptide (Lys-Gly) (interchain with G-Cter in SUMO2)" evidence="20">
    <location>
        <position position="310"/>
    </location>
</feature>
<feature type="cross-link" description="Glycyl lysine isopeptide (Lys-Gly) (interchain with G-Cter in SUMO2)" evidence="18 20">
    <location>
        <position position="396"/>
    </location>
</feature>
<feature type="sequence conflict" description="In Ref. 1; AAA51838." evidence="12" ref="1">
    <original>EPSTPGGPRP</original>
    <variation>RPARQGPDL</variation>
    <location>
        <begin position="9"/>
        <end position="18"/>
    </location>
</feature>
<feature type="sequence conflict" description="In Ref. 6; AAA72377." evidence="12" ref="6">
    <original>EPST</original>
    <variation>RPAR</variation>
    <location>
        <begin position="9"/>
        <end position="12"/>
    </location>
</feature>
<feature type="sequence conflict" description="In Ref. 1." evidence="12" ref="1">
    <original>LIGRRPAPPLTPGRL</original>
    <variation>SSGGGGLPSPPAV</variation>
    <location>
        <begin position="26"/>
        <end position="40"/>
    </location>
</feature>
<feature type="sequence conflict" description="In Ref. 1; AAA51838." evidence="12" ref="1">
    <original>G</original>
    <variation>R</variation>
    <location>
        <position position="98"/>
    </location>
</feature>
<feature type="sequence conflict" description="In Ref. 2; AAM18216." evidence="12" ref="2">
    <original>K</original>
    <variation>R</variation>
    <location>
        <position position="233"/>
    </location>
</feature>
<feature type="sequence conflict" description="In Ref. 2; AAM18216." evidence="12" ref="2">
    <original>P</original>
    <variation>L</variation>
    <location>
        <position position="286"/>
    </location>
</feature>
<feature type="turn" evidence="22">
    <location>
        <begin position="37"/>
        <end position="41"/>
    </location>
</feature>
<feature type="helix" evidence="21">
    <location>
        <begin position="112"/>
        <end position="123"/>
    </location>
</feature>
<feature type="turn" evidence="21">
    <location>
        <begin position="133"/>
        <end position="135"/>
    </location>
</feature>
<feature type="strand" evidence="21">
    <location>
        <begin position="144"/>
        <end position="147"/>
    </location>
</feature>
<feature type="helix" evidence="21">
    <location>
        <begin position="148"/>
        <end position="150"/>
    </location>
</feature>
<feature type="helix" evidence="21">
    <location>
        <begin position="250"/>
        <end position="256"/>
    </location>
</feature>
<feature type="turn" evidence="21">
    <location>
        <begin position="257"/>
        <end position="260"/>
    </location>
</feature>
<feature type="strand" evidence="21">
    <location>
        <begin position="265"/>
        <end position="270"/>
    </location>
</feature>
<feature type="turn" evidence="21">
    <location>
        <begin position="318"/>
        <end position="320"/>
    </location>
</feature>
<feature type="strand" evidence="21">
    <location>
        <begin position="323"/>
        <end position="331"/>
    </location>
</feature>
<feature type="helix" evidence="21">
    <location>
        <begin position="333"/>
        <end position="335"/>
    </location>
</feature>
<feature type="strand" evidence="21">
    <location>
        <begin position="337"/>
        <end position="340"/>
    </location>
</feature>
<feature type="strand" evidence="21">
    <location>
        <begin position="342"/>
        <end position="350"/>
    </location>
</feature>
<feature type="strand" evidence="21">
    <location>
        <begin position="356"/>
        <end position="364"/>
    </location>
</feature>
<feature type="strand" evidence="21">
    <location>
        <begin position="367"/>
        <end position="387"/>
    </location>
</feature>
<feature type="helix" evidence="21">
    <location>
        <begin position="389"/>
        <end position="395"/>
    </location>
</feature>
<organism>
    <name type="scientific">Homo sapiens</name>
    <name type="common">Human</name>
    <dbReference type="NCBI Taxonomy" id="9606"/>
    <lineage>
        <taxon>Eukaryota</taxon>
        <taxon>Metazoa</taxon>
        <taxon>Chordata</taxon>
        <taxon>Craniata</taxon>
        <taxon>Vertebrata</taxon>
        <taxon>Euteleostomi</taxon>
        <taxon>Mammalia</taxon>
        <taxon>Eutheria</taxon>
        <taxon>Euarchontoglires</taxon>
        <taxon>Primates</taxon>
        <taxon>Haplorrhini</taxon>
        <taxon>Catarrhini</taxon>
        <taxon>Hominidae</taxon>
        <taxon>Homo</taxon>
    </lineage>
</organism>
<dbReference type="EMBL" id="M17754">
    <property type="protein sequence ID" value="AAA51838.1"/>
    <property type="molecule type" value="mRNA"/>
</dbReference>
<dbReference type="EMBL" id="AY092086">
    <property type="protein sequence ID" value="AAM18216.1"/>
    <property type="molecule type" value="mRNA"/>
</dbReference>
<dbReference type="EMBL" id="CR536509">
    <property type="protein sequence ID" value="CAG38747.1"/>
    <property type="molecule type" value="mRNA"/>
</dbReference>
<dbReference type="EMBL" id="CR541803">
    <property type="protein sequence ID" value="CAG46602.1"/>
    <property type="molecule type" value="mRNA"/>
</dbReference>
<dbReference type="EMBL" id="BC000516">
    <property type="status" value="NOT_ANNOTATED_CDS"/>
    <property type="molecule type" value="mRNA"/>
</dbReference>
<dbReference type="EMBL" id="BC003039">
    <property type="status" value="NOT_ANNOTATED_CDS"/>
    <property type="molecule type" value="mRNA"/>
</dbReference>
<dbReference type="EMBL" id="BC002603">
    <property type="protein sequence ID" value="AAH02603.1"/>
    <property type="molecule type" value="mRNA"/>
</dbReference>
<dbReference type="EMBL" id="BC004484">
    <property type="protein sequence ID" value="AAH04484.1"/>
    <property type="molecule type" value="mRNA"/>
</dbReference>
<dbReference type="EMBL" id="AF346574">
    <property type="protein sequence ID" value="AAK15371.1"/>
    <property type="molecule type" value="mRNA"/>
</dbReference>
<dbReference type="EMBL" id="L15301">
    <property type="protein sequence ID" value="AAA72377.1"/>
    <property type="molecule type" value="Genomic_DNA"/>
</dbReference>
<dbReference type="CCDS" id="CCDS34858.1"/>
<dbReference type="PIR" id="A43700">
    <property type="entry name" value="A43700"/>
</dbReference>
<dbReference type="RefSeq" id="NP_001713.2">
    <property type="nucleotide sequence ID" value="NM_001722.3"/>
</dbReference>
<dbReference type="PDB" id="7A6H">
    <property type="method" value="EM"/>
    <property type="resolution" value="3.30 A"/>
    <property type="chains" value="N=1-398"/>
</dbReference>
<dbReference type="PDB" id="7AE1">
    <property type="method" value="EM"/>
    <property type="resolution" value="2.80 A"/>
    <property type="chains" value="N=1-398"/>
</dbReference>
<dbReference type="PDB" id="7AE3">
    <property type="method" value="EM"/>
    <property type="resolution" value="3.10 A"/>
    <property type="chains" value="N=1-398"/>
</dbReference>
<dbReference type="PDB" id="7AEA">
    <property type="method" value="EM"/>
    <property type="resolution" value="3.40 A"/>
    <property type="chains" value="N=1-398"/>
</dbReference>
<dbReference type="PDB" id="7AST">
    <property type="method" value="EM"/>
    <property type="resolution" value="4.00 A"/>
    <property type="chains" value="L=1-398"/>
</dbReference>
<dbReference type="PDB" id="7D58">
    <property type="method" value="EM"/>
    <property type="resolution" value="2.90 A"/>
    <property type="chains" value="N=1-398"/>
</dbReference>
<dbReference type="PDB" id="7D59">
    <property type="method" value="EM"/>
    <property type="resolution" value="3.10 A"/>
    <property type="chains" value="N=1-398"/>
</dbReference>
<dbReference type="PDB" id="7DN3">
    <property type="method" value="EM"/>
    <property type="resolution" value="3.50 A"/>
    <property type="chains" value="N=1-398"/>
</dbReference>
<dbReference type="PDB" id="7DU2">
    <property type="method" value="EM"/>
    <property type="resolution" value="3.35 A"/>
    <property type="chains" value="N=1-398"/>
</dbReference>
<dbReference type="PDB" id="7FJI">
    <property type="method" value="EM"/>
    <property type="resolution" value="3.60 A"/>
    <property type="chains" value="N=1-398"/>
</dbReference>
<dbReference type="PDB" id="7FJJ">
    <property type="method" value="EM"/>
    <property type="resolution" value="3.60 A"/>
    <property type="chains" value="N=1-398"/>
</dbReference>
<dbReference type="PDB" id="8ITY">
    <property type="method" value="EM"/>
    <property type="resolution" value="3.90 A"/>
    <property type="chains" value="N=1-398"/>
</dbReference>
<dbReference type="PDB" id="8IUE">
    <property type="method" value="EM"/>
    <property type="resolution" value="4.10 A"/>
    <property type="chains" value="N=1-398"/>
</dbReference>
<dbReference type="PDB" id="8IUH">
    <property type="method" value="EM"/>
    <property type="resolution" value="3.40 A"/>
    <property type="chains" value="N=1-398"/>
</dbReference>
<dbReference type="PDB" id="9FSO">
    <property type="method" value="EM"/>
    <property type="resolution" value="3.28 A"/>
    <property type="chains" value="D=1-398"/>
</dbReference>
<dbReference type="PDB" id="9FSP">
    <property type="method" value="EM"/>
    <property type="resolution" value="3.39 A"/>
    <property type="chains" value="D=1-398"/>
</dbReference>
<dbReference type="PDB" id="9FSQ">
    <property type="method" value="EM"/>
    <property type="resolution" value="3.51 A"/>
    <property type="chains" value="D=1-398"/>
</dbReference>
<dbReference type="PDB" id="9FSR">
    <property type="method" value="EM"/>
    <property type="resolution" value="3.76 A"/>
    <property type="chains" value="D=1-398"/>
</dbReference>
<dbReference type="PDB" id="9FSS">
    <property type="method" value="EM"/>
    <property type="resolution" value="4.14 A"/>
    <property type="chains" value="D=1-398"/>
</dbReference>
<dbReference type="PDBsum" id="7A6H"/>
<dbReference type="PDBsum" id="7AE1"/>
<dbReference type="PDBsum" id="7AE3"/>
<dbReference type="PDBsum" id="7AEA"/>
<dbReference type="PDBsum" id="7AST"/>
<dbReference type="PDBsum" id="7D58"/>
<dbReference type="PDBsum" id="7D59"/>
<dbReference type="PDBsum" id="7DN3"/>
<dbReference type="PDBsum" id="7DU2"/>
<dbReference type="PDBsum" id="7FJI"/>
<dbReference type="PDBsum" id="7FJJ"/>
<dbReference type="PDBsum" id="8ITY"/>
<dbReference type="PDBsum" id="8IUE"/>
<dbReference type="PDBsum" id="8IUH"/>
<dbReference type="PDBsum" id="9FSO"/>
<dbReference type="PDBsum" id="9FSP"/>
<dbReference type="PDBsum" id="9FSQ"/>
<dbReference type="PDBsum" id="9FSR"/>
<dbReference type="PDBsum" id="9FSS"/>
<dbReference type="EMDB" id="EMD-11673"/>
<dbReference type="EMDB" id="EMD-11736"/>
<dbReference type="EMDB" id="EMD-11738"/>
<dbReference type="EMDB" id="EMD-11742"/>
<dbReference type="EMDB" id="EMD-11904"/>
<dbReference type="EMDB" id="EMD-30577"/>
<dbReference type="EMDB" id="EMD-30578"/>
<dbReference type="EMDB" id="EMD-30779"/>
<dbReference type="EMDB" id="EMD-30865"/>
<dbReference type="EMDB" id="EMD-31621"/>
<dbReference type="EMDB" id="EMD-31622"/>
<dbReference type="EMDB" id="EMD-35712"/>
<dbReference type="EMDB" id="EMD-35719"/>
<dbReference type="EMDB" id="EMD-35722"/>
<dbReference type="EMDB" id="EMD-50730"/>
<dbReference type="EMDB" id="EMD-50731"/>
<dbReference type="EMDB" id="EMD-50732"/>
<dbReference type="EMDB" id="EMD-50733"/>
<dbReference type="EMDB" id="EMD-50734"/>
<dbReference type="SMR" id="P05423"/>
<dbReference type="BioGRID" id="107129">
    <property type="interactions" value="93"/>
</dbReference>
<dbReference type="ComplexPortal" id="CPX-2393">
    <property type="entry name" value="DNA-directed RNA polymerase III complex, POLR3G variant"/>
</dbReference>
<dbReference type="ComplexPortal" id="CPX-7482">
    <property type="entry name" value="DNA-directed RNA polymerase III complex, POLR3GL variant"/>
</dbReference>
<dbReference type="CORUM" id="P05423"/>
<dbReference type="DIP" id="DIP-56155N"/>
<dbReference type="FunCoup" id="P05423">
    <property type="interactions" value="2536"/>
</dbReference>
<dbReference type="IntAct" id="P05423">
    <property type="interactions" value="53"/>
</dbReference>
<dbReference type="MINT" id="P05423"/>
<dbReference type="STRING" id="9606.ENSP00000380904"/>
<dbReference type="GlyGen" id="P05423">
    <property type="glycosylation" value="2 sites, 1 O-linked glycan (1 site)"/>
</dbReference>
<dbReference type="iPTMnet" id="P05423"/>
<dbReference type="PhosphoSitePlus" id="P05423"/>
<dbReference type="SwissPalm" id="P05423"/>
<dbReference type="BioMuta" id="POLR3D"/>
<dbReference type="DMDM" id="29429159"/>
<dbReference type="jPOST" id="P05423"/>
<dbReference type="MassIVE" id="P05423"/>
<dbReference type="PaxDb" id="9606-ENSP00000380904"/>
<dbReference type="PeptideAtlas" id="P05423"/>
<dbReference type="ProteomicsDB" id="51838"/>
<dbReference type="Pumba" id="P05423"/>
<dbReference type="Antibodypedia" id="22571">
    <property type="antibodies" value="188 antibodies from 28 providers"/>
</dbReference>
<dbReference type="DNASU" id="661"/>
<dbReference type="Ensembl" id="ENST00000306433.9">
    <property type="protein sequence ID" value="ENSP00000303088.4"/>
    <property type="gene ID" value="ENSG00000168495.13"/>
</dbReference>
<dbReference type="Ensembl" id="ENST00000397802.8">
    <property type="protein sequence ID" value="ENSP00000380904.3"/>
    <property type="gene ID" value="ENSG00000168495.13"/>
</dbReference>
<dbReference type="GeneID" id="661"/>
<dbReference type="KEGG" id="hsa:661"/>
<dbReference type="MANE-Select" id="ENST00000306433.9">
    <property type="protein sequence ID" value="ENSP00000303088.4"/>
    <property type="RefSeq nucleotide sequence ID" value="NM_001722.3"/>
    <property type="RefSeq protein sequence ID" value="NP_001713.2"/>
</dbReference>
<dbReference type="UCSC" id="uc003xbl.4">
    <property type="organism name" value="human"/>
</dbReference>
<dbReference type="AGR" id="HGNC:1080"/>
<dbReference type="CTD" id="661"/>
<dbReference type="DisGeNET" id="661"/>
<dbReference type="GeneCards" id="POLR3D"/>
<dbReference type="HGNC" id="HGNC:1080">
    <property type="gene designation" value="POLR3D"/>
</dbReference>
<dbReference type="HPA" id="ENSG00000168495">
    <property type="expression patterns" value="Low tissue specificity"/>
</dbReference>
<dbReference type="MIM" id="187280">
    <property type="type" value="gene"/>
</dbReference>
<dbReference type="neXtProt" id="NX_P05423"/>
<dbReference type="OpenTargets" id="ENSG00000168495"/>
<dbReference type="PharmGKB" id="PA25390"/>
<dbReference type="VEuPathDB" id="HostDB:ENSG00000168495"/>
<dbReference type="eggNOG" id="KOG3122">
    <property type="taxonomic scope" value="Eukaryota"/>
</dbReference>
<dbReference type="GeneTree" id="ENSGT00390000013948"/>
<dbReference type="HOGENOM" id="CLU_042288_0_0_1"/>
<dbReference type="InParanoid" id="P05423"/>
<dbReference type="OMA" id="GTWDKTV"/>
<dbReference type="OrthoDB" id="5836119at2759"/>
<dbReference type="PAN-GO" id="P05423">
    <property type="GO annotations" value="1 GO annotation based on evolutionary models"/>
</dbReference>
<dbReference type="PhylomeDB" id="P05423"/>
<dbReference type="PathwayCommons" id="P05423"/>
<dbReference type="Reactome" id="R-HSA-1834949">
    <property type="pathway name" value="Cytosolic sensors of pathogen-associated DNA"/>
</dbReference>
<dbReference type="Reactome" id="R-HSA-73780">
    <property type="pathway name" value="RNA Polymerase III Chain Elongation"/>
</dbReference>
<dbReference type="Reactome" id="R-HSA-73980">
    <property type="pathway name" value="RNA Polymerase III Transcription Termination"/>
</dbReference>
<dbReference type="Reactome" id="R-HSA-749476">
    <property type="pathway name" value="RNA Polymerase III Abortive And Retractive Initiation"/>
</dbReference>
<dbReference type="Reactome" id="R-HSA-76061">
    <property type="pathway name" value="RNA Polymerase III Transcription Initiation From Type 1 Promoter"/>
</dbReference>
<dbReference type="Reactome" id="R-HSA-76066">
    <property type="pathway name" value="RNA Polymerase III Transcription Initiation From Type 2 Promoter"/>
</dbReference>
<dbReference type="Reactome" id="R-HSA-76071">
    <property type="pathway name" value="RNA Polymerase III Transcription Initiation From Type 3 Promoter"/>
</dbReference>
<dbReference type="SignaLink" id="P05423"/>
<dbReference type="SIGNOR" id="P05423"/>
<dbReference type="BioGRID-ORCS" id="661">
    <property type="hits" value="429 hits in 1161 CRISPR screens"/>
</dbReference>
<dbReference type="ChiTaRS" id="POLR3D">
    <property type="organism name" value="human"/>
</dbReference>
<dbReference type="GeneWiki" id="POLR3D"/>
<dbReference type="GenomeRNAi" id="661"/>
<dbReference type="Pharos" id="P05423">
    <property type="development level" value="Tbio"/>
</dbReference>
<dbReference type="PRO" id="PR:P05423"/>
<dbReference type="Proteomes" id="UP000005640">
    <property type="component" value="Chromosome 8"/>
</dbReference>
<dbReference type="RNAct" id="P05423">
    <property type="molecule type" value="protein"/>
</dbReference>
<dbReference type="Bgee" id="ENSG00000168495">
    <property type="expression patterns" value="Expressed in sural nerve and 137 other cell types or tissues"/>
</dbReference>
<dbReference type="ExpressionAtlas" id="P05423">
    <property type="expression patterns" value="baseline and differential"/>
</dbReference>
<dbReference type="GO" id="GO:0005829">
    <property type="term" value="C:cytosol"/>
    <property type="evidence" value="ECO:0000314"/>
    <property type="project" value="HPA"/>
</dbReference>
<dbReference type="GO" id="GO:0005654">
    <property type="term" value="C:nucleoplasm"/>
    <property type="evidence" value="ECO:0000314"/>
    <property type="project" value="HPA"/>
</dbReference>
<dbReference type="GO" id="GO:0005666">
    <property type="term" value="C:RNA polymerase III complex"/>
    <property type="evidence" value="ECO:0000314"/>
    <property type="project" value="UniProtKB"/>
</dbReference>
<dbReference type="GO" id="GO:0003682">
    <property type="term" value="F:chromatin binding"/>
    <property type="evidence" value="ECO:0000314"/>
    <property type="project" value="MGI"/>
</dbReference>
<dbReference type="GO" id="GO:0003677">
    <property type="term" value="F:DNA binding"/>
    <property type="evidence" value="ECO:0007669"/>
    <property type="project" value="InterPro"/>
</dbReference>
<dbReference type="GO" id="GO:0051607">
    <property type="term" value="P:defense response to virus"/>
    <property type="evidence" value="ECO:0007669"/>
    <property type="project" value="UniProtKB-KW"/>
</dbReference>
<dbReference type="GO" id="GO:0045087">
    <property type="term" value="P:innate immune response"/>
    <property type="evidence" value="ECO:0007669"/>
    <property type="project" value="UniProtKB-KW"/>
</dbReference>
<dbReference type="GO" id="GO:0045089">
    <property type="term" value="P:positive regulation of innate immune response"/>
    <property type="evidence" value="ECO:0000314"/>
    <property type="project" value="UniProtKB"/>
</dbReference>
<dbReference type="GO" id="GO:0032728">
    <property type="term" value="P:positive regulation of interferon-beta production"/>
    <property type="evidence" value="ECO:0000314"/>
    <property type="project" value="UniProtKB"/>
</dbReference>
<dbReference type="GO" id="GO:0042797">
    <property type="term" value="P:tRNA transcription by RNA polymerase III"/>
    <property type="evidence" value="ECO:0000318"/>
    <property type="project" value="GO_Central"/>
</dbReference>
<dbReference type="InterPro" id="IPR007811">
    <property type="entry name" value="RPC4"/>
</dbReference>
<dbReference type="PANTHER" id="PTHR13408">
    <property type="entry name" value="DNA-DIRECTED RNA POLYMERASE III"/>
    <property type="match status" value="1"/>
</dbReference>
<dbReference type="PANTHER" id="PTHR13408:SF0">
    <property type="entry name" value="DNA-DIRECTED RNA POLYMERASE III SUBUNIT RPC4"/>
    <property type="match status" value="1"/>
</dbReference>
<dbReference type="Pfam" id="PF05132">
    <property type="entry name" value="RNA_pol_Rpc4"/>
    <property type="match status" value="1"/>
</dbReference>